<protein>
    <recommendedName>
        <fullName evidence="6">Endoribonuclease EndoA</fullName>
        <ecNumber evidence="2">3.1.27.-</ecNumber>
    </recommendedName>
    <alternativeName>
        <fullName>Toxin EndoA</fullName>
    </alternativeName>
    <alternativeName>
        <fullName>mRNA interferase EndoA</fullName>
    </alternativeName>
    <alternativeName>
        <fullName evidence="7">mRNA interferase MazF-bs</fullName>
        <shortName>MazF-bs</shortName>
    </alternativeName>
</protein>
<reference key="1">
    <citation type="submission" date="1997-03" db="EMBL/GenBank/DDBJ databases">
        <title>A 148 kbp sequence of the region between 35 and 47 degree of the Bacillus subtilis genome.</title>
        <authorList>
            <person name="Kasahara Y."/>
            <person name="Nakai S."/>
            <person name="Lee S."/>
            <person name="Sadaie Y."/>
            <person name="Ogasawara N."/>
        </authorList>
    </citation>
    <scope>NUCLEOTIDE SEQUENCE [GENOMIC DNA]</scope>
    <source>
        <strain>168</strain>
    </source>
</reference>
<reference key="2">
    <citation type="journal article" date="1997" name="Nature">
        <title>The complete genome sequence of the Gram-positive bacterium Bacillus subtilis.</title>
        <authorList>
            <person name="Kunst F."/>
            <person name="Ogasawara N."/>
            <person name="Moszer I."/>
            <person name="Albertini A.M."/>
            <person name="Alloni G."/>
            <person name="Azevedo V."/>
            <person name="Bertero M.G."/>
            <person name="Bessieres P."/>
            <person name="Bolotin A."/>
            <person name="Borchert S."/>
            <person name="Borriss R."/>
            <person name="Boursier L."/>
            <person name="Brans A."/>
            <person name="Braun M."/>
            <person name="Brignell S.C."/>
            <person name="Bron S."/>
            <person name="Brouillet S."/>
            <person name="Bruschi C.V."/>
            <person name="Caldwell B."/>
            <person name="Capuano V."/>
            <person name="Carter N.M."/>
            <person name="Choi S.-K."/>
            <person name="Codani J.-J."/>
            <person name="Connerton I.F."/>
            <person name="Cummings N.J."/>
            <person name="Daniel R.A."/>
            <person name="Denizot F."/>
            <person name="Devine K.M."/>
            <person name="Duesterhoeft A."/>
            <person name="Ehrlich S.D."/>
            <person name="Emmerson P.T."/>
            <person name="Entian K.-D."/>
            <person name="Errington J."/>
            <person name="Fabret C."/>
            <person name="Ferrari E."/>
            <person name="Foulger D."/>
            <person name="Fritz C."/>
            <person name="Fujita M."/>
            <person name="Fujita Y."/>
            <person name="Fuma S."/>
            <person name="Galizzi A."/>
            <person name="Galleron N."/>
            <person name="Ghim S.-Y."/>
            <person name="Glaser P."/>
            <person name="Goffeau A."/>
            <person name="Golightly E.J."/>
            <person name="Grandi G."/>
            <person name="Guiseppi G."/>
            <person name="Guy B.J."/>
            <person name="Haga K."/>
            <person name="Haiech J."/>
            <person name="Harwood C.R."/>
            <person name="Henaut A."/>
            <person name="Hilbert H."/>
            <person name="Holsappel S."/>
            <person name="Hosono S."/>
            <person name="Hullo M.-F."/>
            <person name="Itaya M."/>
            <person name="Jones L.-M."/>
            <person name="Joris B."/>
            <person name="Karamata D."/>
            <person name="Kasahara Y."/>
            <person name="Klaerr-Blanchard M."/>
            <person name="Klein C."/>
            <person name="Kobayashi Y."/>
            <person name="Koetter P."/>
            <person name="Koningstein G."/>
            <person name="Krogh S."/>
            <person name="Kumano M."/>
            <person name="Kurita K."/>
            <person name="Lapidus A."/>
            <person name="Lardinois S."/>
            <person name="Lauber J."/>
            <person name="Lazarevic V."/>
            <person name="Lee S.-M."/>
            <person name="Levine A."/>
            <person name="Liu H."/>
            <person name="Masuda S."/>
            <person name="Mauel C."/>
            <person name="Medigue C."/>
            <person name="Medina N."/>
            <person name="Mellado R.P."/>
            <person name="Mizuno M."/>
            <person name="Moestl D."/>
            <person name="Nakai S."/>
            <person name="Noback M."/>
            <person name="Noone D."/>
            <person name="O'Reilly M."/>
            <person name="Ogawa K."/>
            <person name="Ogiwara A."/>
            <person name="Oudega B."/>
            <person name="Park S.-H."/>
            <person name="Parro V."/>
            <person name="Pohl T.M."/>
            <person name="Portetelle D."/>
            <person name="Porwollik S."/>
            <person name="Prescott A.M."/>
            <person name="Presecan E."/>
            <person name="Pujic P."/>
            <person name="Purnelle B."/>
            <person name="Rapoport G."/>
            <person name="Rey M."/>
            <person name="Reynolds S."/>
            <person name="Rieger M."/>
            <person name="Rivolta C."/>
            <person name="Rocha E."/>
            <person name="Roche B."/>
            <person name="Rose M."/>
            <person name="Sadaie Y."/>
            <person name="Sato T."/>
            <person name="Scanlan E."/>
            <person name="Schleich S."/>
            <person name="Schroeter R."/>
            <person name="Scoffone F."/>
            <person name="Sekiguchi J."/>
            <person name="Sekowska A."/>
            <person name="Seror S.J."/>
            <person name="Serror P."/>
            <person name="Shin B.-S."/>
            <person name="Soldo B."/>
            <person name="Sorokin A."/>
            <person name="Tacconi E."/>
            <person name="Takagi T."/>
            <person name="Takahashi H."/>
            <person name="Takemaru K."/>
            <person name="Takeuchi M."/>
            <person name="Tamakoshi A."/>
            <person name="Tanaka T."/>
            <person name="Terpstra P."/>
            <person name="Tognoni A."/>
            <person name="Tosato V."/>
            <person name="Uchiyama S."/>
            <person name="Vandenbol M."/>
            <person name="Vannier F."/>
            <person name="Vassarotti A."/>
            <person name="Viari A."/>
            <person name="Wambutt R."/>
            <person name="Wedler E."/>
            <person name="Wedler H."/>
            <person name="Weitzenegger T."/>
            <person name="Winters P."/>
            <person name="Wipat A."/>
            <person name="Yamamoto H."/>
            <person name="Yamane K."/>
            <person name="Yasumoto K."/>
            <person name="Yata K."/>
            <person name="Yoshida K."/>
            <person name="Yoshikawa H.-F."/>
            <person name="Zumstein E."/>
            <person name="Yoshikawa H."/>
            <person name="Danchin A."/>
        </authorList>
    </citation>
    <scope>NUCLEOTIDE SEQUENCE [LARGE SCALE GENOMIC DNA]</scope>
    <source>
        <strain>168</strain>
    </source>
</reference>
<reference key="3">
    <citation type="journal article" date="2005" name="Mol. Microbiol.">
        <title>The Bacillus subtilis ydcDE operon encodes an endoribonuclease of the MazF/PemK family and its inhibitor.</title>
        <authorList>
            <person name="Pellegrini O."/>
            <person name="Mathy N."/>
            <person name="Gogos A."/>
            <person name="Shapiro L."/>
            <person name="Condon C."/>
        </authorList>
    </citation>
    <scope>FUNCTION AS AN ENDORIBONUCLEASE</scope>
    <scope>CATALYTIC ACTIVITY</scope>
    <scope>INHIBITION BY ENDOAI</scope>
    <scope>SUBUNIT</scope>
    <scope>EXPRESSION IN E.COLI</scope>
    <source>
        <strain>168</strain>
    </source>
</reference>
<reference key="4">
    <citation type="journal article" date="2011" name="FEBS Lett.">
        <title>Bacillus subtilis MazF-bs (EndoA) is a UACAU-specific mRNA interferase.</title>
        <authorList>
            <person name="Park J.H."/>
            <person name="Yamaguchi Y."/>
            <person name="Inouye M."/>
        </authorList>
    </citation>
    <scope>FUNCTION AS AN MRNA INTERFERASE</scope>
    <scope>INHIBITION BY ENDOAI</scope>
    <scope>EXPRESSION IN E.COLI</scope>
    <source>
        <strain>168</strain>
    </source>
</reference>
<reference key="5">
    <citation type="journal article" date="2013" name="J. Biol. Chem.">
        <title>Replacement of all arginine residues with canavanine in MazF-bs mRNA interferase changes its specificity.</title>
        <authorList>
            <person name="Ishida Y."/>
            <person name="Park J.H."/>
            <person name="Mao L."/>
            <person name="Yamaguchi Y."/>
            <person name="Inouye M."/>
        </authorList>
    </citation>
    <scope>FUNCTION</scope>
    <scope>SUBSTRATE SPECIFICITY</scope>
</reference>
<reference key="6">
    <citation type="journal article" date="2003" name="Proteins">
        <title>Crystal structure of YdcE protein from Bacillus subtilis.</title>
        <authorList>
            <person name="Gogos A."/>
            <person name="Mu H."/>
            <person name="Bahna F."/>
            <person name="Gomez C.A."/>
            <person name="Shapiro L."/>
        </authorList>
    </citation>
    <scope>X-RAY CRYSTALLOGRAPHY (2.1 ANGSTROMS) OF 2-116</scope>
    <scope>SUBUNIT</scope>
</reference>
<reference key="7">
    <citation type="journal article" date="2013" name="Mol. Cell">
        <title>Structural basis of mRNA recognition and cleavage by toxin MazF and its regulation by antitoxin MazE in Bacillus subtilis.</title>
        <authorList>
            <person name="Simanshu D.K."/>
            <person name="Yamaguchi Y."/>
            <person name="Park J.H."/>
            <person name="Inouye M."/>
            <person name="Patel D.J."/>
        </authorList>
    </citation>
    <scope>X-RAY CRYSTALLOGRAPHY (1.50 ANGSTROMS) IN COMPLEX WITH SUBSTRATE OR MAZE</scope>
    <scope>FUNCTION</scope>
    <scope>SUBUNIT</scope>
    <scope>RNA-BINDING</scope>
    <scope>MUTAGENESIS OF PHE-10; SER-19; GLN-21; ARG-25; ASN-32; THR-48; GLN-50; LYS-53; LEU-56; HIS-59; ARG-71; SER-73; GLU-78; GLN-79 AND ASP-90</scope>
    <source>
        <strain>168</strain>
    </source>
</reference>
<dbReference type="EC" id="3.1.27.-" evidence="2"/>
<dbReference type="EMBL" id="AB001488">
    <property type="protein sequence ID" value="BAA19303.1"/>
    <property type="molecule type" value="Genomic_DNA"/>
</dbReference>
<dbReference type="EMBL" id="AL009126">
    <property type="protein sequence ID" value="CAB12273.1"/>
    <property type="molecule type" value="Genomic_DNA"/>
</dbReference>
<dbReference type="PIR" id="C69773">
    <property type="entry name" value="C69773"/>
</dbReference>
<dbReference type="RefSeq" id="NP_388347.1">
    <property type="nucleotide sequence ID" value="NC_000964.3"/>
</dbReference>
<dbReference type="RefSeq" id="WP_003156187.1">
    <property type="nucleotide sequence ID" value="NZ_OZ025638.1"/>
</dbReference>
<dbReference type="PDB" id="1NE8">
    <property type="method" value="X-ray"/>
    <property type="resolution" value="2.10 A"/>
    <property type="chains" value="A=2-116"/>
</dbReference>
<dbReference type="PDB" id="4MDX">
    <property type="method" value="X-ray"/>
    <property type="resolution" value="1.50 A"/>
    <property type="chains" value="A/B=1-116"/>
</dbReference>
<dbReference type="PDB" id="4ME7">
    <property type="method" value="X-ray"/>
    <property type="resolution" value="2.92 A"/>
    <property type="chains" value="A/B/C/D=2-116"/>
</dbReference>
<dbReference type="PDBsum" id="1NE8"/>
<dbReference type="PDBsum" id="4MDX"/>
<dbReference type="PDBsum" id="4ME7"/>
<dbReference type="SMR" id="P96622"/>
<dbReference type="FunCoup" id="P96622">
    <property type="interactions" value="95"/>
</dbReference>
<dbReference type="STRING" id="224308.BSU04660"/>
<dbReference type="DrugBank" id="DB02042">
    <property type="generic name" value="2-(2-{2-[2-(2-Methoxy-Ethoxy)-Ethoxy]-Ethoxy}-Ethoxy)-Ethanol"/>
</dbReference>
<dbReference type="jPOST" id="P96622"/>
<dbReference type="PaxDb" id="224308-BSU04660"/>
<dbReference type="EnsemblBacteria" id="CAB12273">
    <property type="protein sequence ID" value="CAB12273"/>
    <property type="gene ID" value="BSU_04660"/>
</dbReference>
<dbReference type="GeneID" id="93079633"/>
<dbReference type="GeneID" id="939935"/>
<dbReference type="KEGG" id="bsu:BSU04660"/>
<dbReference type="PATRIC" id="fig|224308.179.peg.494"/>
<dbReference type="eggNOG" id="COG2337">
    <property type="taxonomic scope" value="Bacteria"/>
</dbReference>
<dbReference type="InParanoid" id="P96622"/>
<dbReference type="OrthoDB" id="9808744at2"/>
<dbReference type="PhylomeDB" id="P96622"/>
<dbReference type="BioCyc" id="BSUB:BSU04660-MONOMER"/>
<dbReference type="EvolutionaryTrace" id="P96622"/>
<dbReference type="PRO" id="PR:P96622"/>
<dbReference type="Proteomes" id="UP000001570">
    <property type="component" value="Chromosome"/>
</dbReference>
<dbReference type="GO" id="GO:0003677">
    <property type="term" value="F:DNA binding"/>
    <property type="evidence" value="ECO:0007669"/>
    <property type="project" value="InterPro"/>
</dbReference>
<dbReference type="GO" id="GO:0003723">
    <property type="term" value="F:RNA binding"/>
    <property type="evidence" value="ECO:0007669"/>
    <property type="project" value="UniProtKB-KW"/>
</dbReference>
<dbReference type="GO" id="GO:0004521">
    <property type="term" value="F:RNA endonuclease activity"/>
    <property type="evidence" value="ECO:0000318"/>
    <property type="project" value="GO_Central"/>
</dbReference>
<dbReference type="GO" id="GO:0006402">
    <property type="term" value="P:mRNA catabolic process"/>
    <property type="evidence" value="ECO:0000318"/>
    <property type="project" value="GO_Central"/>
</dbReference>
<dbReference type="GO" id="GO:0016075">
    <property type="term" value="P:rRNA catabolic process"/>
    <property type="evidence" value="ECO:0000318"/>
    <property type="project" value="GO_Central"/>
</dbReference>
<dbReference type="Gene3D" id="2.30.30.110">
    <property type="match status" value="1"/>
</dbReference>
<dbReference type="InterPro" id="IPR003477">
    <property type="entry name" value="PemK-like"/>
</dbReference>
<dbReference type="InterPro" id="IPR011067">
    <property type="entry name" value="Plasmid_toxin/cell-grow_inhib"/>
</dbReference>
<dbReference type="PANTHER" id="PTHR33988:SF2">
    <property type="entry name" value="ENDORIBONUCLEASE MAZF"/>
    <property type="match status" value="1"/>
</dbReference>
<dbReference type="PANTHER" id="PTHR33988">
    <property type="entry name" value="ENDORIBONUCLEASE MAZF-RELATED"/>
    <property type="match status" value="1"/>
</dbReference>
<dbReference type="Pfam" id="PF02452">
    <property type="entry name" value="PemK_toxin"/>
    <property type="match status" value="1"/>
</dbReference>
<dbReference type="PIRSF" id="PIRSF033490">
    <property type="entry name" value="MazF"/>
    <property type="match status" value="1"/>
</dbReference>
<dbReference type="SUPFAM" id="SSF50118">
    <property type="entry name" value="Cell growth inhibitor/plasmid maintenance toxic component"/>
    <property type="match status" value="1"/>
</dbReference>
<sequence length="116" mass="12978">MIVKRGDVYFADLSPVVGSEQGGVRPVLVIQNDIGNRFSPTAIVAAITAQIQKAKLPTHVEIDAKRYGFERDSVILLEQIRTIDKQRLTDKITHLDDEMMDKVDEALQISLALIDF</sequence>
<accession>P96622</accession>
<accession>Q797K4</accession>
<organism>
    <name type="scientific">Bacillus subtilis (strain 168)</name>
    <dbReference type="NCBI Taxonomy" id="224308"/>
    <lineage>
        <taxon>Bacteria</taxon>
        <taxon>Bacillati</taxon>
        <taxon>Bacillota</taxon>
        <taxon>Bacilli</taxon>
        <taxon>Bacillales</taxon>
        <taxon>Bacillaceae</taxon>
        <taxon>Bacillus</taxon>
    </lineage>
</organism>
<gene>
    <name evidence="6" type="primary">ndoA</name>
    <name type="synonym">mazF</name>
    <name type="synonym">ydcE</name>
    <name type="ordered locus">BSU04660</name>
</gene>
<feature type="chain" id="PRO_0000201900" description="Endoribonuclease EndoA">
    <location>
        <begin position="1"/>
        <end position="116"/>
    </location>
</feature>
<feature type="site" description="Transition state stabilizer" evidence="9">
    <location>
        <position position="25"/>
    </location>
</feature>
<feature type="mutagenesis site" description="Remains toxic in E.coli." evidence="5">
    <original>F</original>
    <variation>A</variation>
    <location>
        <position position="10"/>
    </location>
</feature>
<feature type="mutagenesis site" description="Partially toxic in E.coli." evidence="5">
    <original>S</original>
    <variation>A</variation>
    <location>
        <position position="19"/>
    </location>
</feature>
<feature type="mutagenesis site" description="Not toxic in E.coli." evidence="5">
    <original>Q</original>
    <variation>A</variation>
    <location>
        <position position="21"/>
    </location>
</feature>
<feature type="mutagenesis site" description="Not toxic in E.coli, 50-fold decreased RNA-binding." evidence="5">
    <original>R</original>
    <variation>A</variation>
    <location>
        <position position="25"/>
    </location>
</feature>
<feature type="mutagenesis site" description="Not toxic in E.coli." evidence="5">
    <original>N</original>
    <variation>A</variation>
    <location>
        <position position="32"/>
    </location>
</feature>
<feature type="mutagenesis site" description="Not toxic in E.coli." evidence="5">
    <original>T</original>
    <variation>A</variation>
    <location>
        <position position="48"/>
    </location>
</feature>
<feature type="mutagenesis site" description="Remains toxic in E.coli." evidence="5">
    <original>Q</original>
    <variation>A</variation>
    <location>
        <position position="50"/>
    </location>
</feature>
<feature type="mutagenesis site" description="Not toxic in E.coli, 70-fold decreased RNA-binding." evidence="5">
    <original>K</original>
    <variation>A</variation>
    <location>
        <position position="53"/>
    </location>
</feature>
<feature type="mutagenesis site" description="Not toxic in E.coli." evidence="5">
    <original>L</original>
    <variation>A</variation>
    <location>
        <position position="56"/>
    </location>
</feature>
<feature type="mutagenesis site" description="Not toxic in E.coli." evidence="5">
    <original>H</original>
    <variation>A</variation>
    <location>
        <position position="59"/>
    </location>
</feature>
<feature type="mutagenesis site" description="Remains toxic in E.coli." evidence="5">
    <original>R</original>
    <variation>A</variation>
    <location>
        <position position="71"/>
    </location>
</feature>
<feature type="mutagenesis site" description="Not toxic in E.coli, 100-fold decreased RNA-binding." evidence="5">
    <original>S</original>
    <variation>A</variation>
    <location>
        <position position="73"/>
    </location>
</feature>
<feature type="mutagenesis site" description="Not toxic in E.coli, 625-fold decreased RNA-binding." evidence="5">
    <original>E</original>
    <variation>A</variation>
    <location>
        <position position="78"/>
    </location>
</feature>
<feature type="mutagenesis site" description="Not toxic in E.coli." evidence="5">
    <original>Q</original>
    <variation>A</variation>
    <location>
        <position position="79"/>
    </location>
</feature>
<feature type="mutagenesis site" description="Remains toxic in E.coli." evidence="5">
    <original>D</original>
    <variation>A</variation>
    <location>
        <position position="90"/>
    </location>
</feature>
<feature type="strand" evidence="10">
    <location>
        <begin position="7"/>
        <end position="12"/>
    </location>
</feature>
<feature type="strand" evidence="10">
    <location>
        <begin position="23"/>
        <end position="29"/>
    </location>
</feature>
<feature type="helix" evidence="10">
    <location>
        <begin position="33"/>
        <end position="38"/>
    </location>
</feature>
<feature type="strand" evidence="10">
    <location>
        <begin position="40"/>
        <end position="50"/>
    </location>
</feature>
<feature type="strand" evidence="10">
    <location>
        <begin position="59"/>
        <end position="62"/>
    </location>
</feature>
<feature type="helix" evidence="10">
    <location>
        <begin position="64"/>
        <end position="67"/>
    </location>
</feature>
<feature type="strand" evidence="10">
    <location>
        <begin position="73"/>
        <end position="84"/>
    </location>
</feature>
<feature type="helix" evidence="10">
    <location>
        <begin position="85"/>
        <end position="87"/>
    </location>
</feature>
<feature type="strand" evidence="10">
    <location>
        <begin position="88"/>
        <end position="94"/>
    </location>
</feature>
<feature type="helix" evidence="10">
    <location>
        <begin position="97"/>
        <end position="110"/>
    </location>
</feature>
<comment type="function">
    <text evidence="2 3 4 5">Toxic component of a type II toxin-antitoxin (TA) system. Specific for 5'-UACAU-3' sequences, cleaving after the first U (PubMed:21763692). Yields cleavage products with 3' phosphate and 5' hydroxyl groups (PubMed:15882409). Cannot digest substrate with a UUdUACAUAA cleavage site (PubMed:24120662). Overexpression is toxic for cell growth (shown in E.coli), probably by inhibiting protein synthesis through the cleavage of single-stranded RNA. The toxicity is reversed by the antitoxin EndoAI. Toxin activity cannot be inhibited by MazE from E.coli. The EndoA-EndoAI complex does not seem to bind its own promoter (PubMed:24120662).</text>
</comment>
<comment type="subunit">
    <text evidence="1 2 5">Homodimer (PubMed:14517982, PubMed:24120662). Forms a complex with antitoxin EndoAI in which the toxin activity is inhibited (PubMed:15882409). One dimer binds a ssRNA substrate, forms a heterohexamer composed of alternating toxin and antitoxin homodimers which inhibits the endoribonuclease activity. Antitoxin prevents RNA binding to the endoribonuclease (PubMed:24120662).</text>
</comment>
<comment type="miscellaneous">
    <text evidence="4">Replacing all Arg residues by canavanine yields an enzyme that recognizes a longer consensus sequence UACAUA, thus altering its substrate specificity. Still cleaves between the first and second nucleotides.</text>
</comment>
<comment type="similarity">
    <text evidence="8">Belongs to the PemK/MazF family.</text>
</comment>
<keyword id="KW-0002">3D-structure</keyword>
<keyword id="KW-0255">Endonuclease</keyword>
<keyword id="KW-0378">Hydrolase</keyword>
<keyword id="KW-0540">Nuclease</keyword>
<keyword id="KW-1185">Reference proteome</keyword>
<keyword id="KW-0694">RNA-binding</keyword>
<keyword id="KW-1277">Toxin-antitoxin system</keyword>
<name>ENDOA_BACSU</name>
<proteinExistence type="evidence at protein level"/>
<evidence type="ECO:0000269" key="1">
    <source>
    </source>
</evidence>
<evidence type="ECO:0000269" key="2">
    <source>
    </source>
</evidence>
<evidence type="ECO:0000269" key="3">
    <source>
    </source>
</evidence>
<evidence type="ECO:0000269" key="4">
    <source>
    </source>
</evidence>
<evidence type="ECO:0000269" key="5">
    <source>
    </source>
</evidence>
<evidence type="ECO:0000303" key="6">
    <source>
    </source>
</evidence>
<evidence type="ECO:0000303" key="7">
    <source>
    </source>
</evidence>
<evidence type="ECO:0000305" key="8"/>
<evidence type="ECO:0000305" key="9">
    <source>
    </source>
</evidence>
<evidence type="ECO:0007829" key="10">
    <source>
        <dbReference type="PDB" id="4MDX"/>
    </source>
</evidence>